<keyword id="KW-0963">Cytoplasm</keyword>
<keyword id="KW-0378">Hydrolase</keyword>
<keyword id="KW-1185">Reference proteome</keyword>
<keyword id="KW-0694">RNA-binding</keyword>
<keyword id="KW-0820">tRNA-binding</keyword>
<reference key="1">
    <citation type="journal article" date="2002" name="Nucleic Acids Res.">
        <title>Genome sequence of Shigella flexneri 2a: insights into pathogenicity through comparison with genomes of Escherichia coli K12 and O157.</title>
        <authorList>
            <person name="Jin Q."/>
            <person name="Yuan Z."/>
            <person name="Xu J."/>
            <person name="Wang Y."/>
            <person name="Shen Y."/>
            <person name="Lu W."/>
            <person name="Wang J."/>
            <person name="Liu H."/>
            <person name="Yang J."/>
            <person name="Yang F."/>
            <person name="Zhang X."/>
            <person name="Zhang J."/>
            <person name="Yang G."/>
            <person name="Wu H."/>
            <person name="Qu D."/>
            <person name="Dong J."/>
            <person name="Sun L."/>
            <person name="Xue Y."/>
            <person name="Zhao A."/>
            <person name="Gao Y."/>
            <person name="Zhu J."/>
            <person name="Kan B."/>
            <person name="Ding K."/>
            <person name="Chen S."/>
            <person name="Cheng H."/>
            <person name="Yao Z."/>
            <person name="He B."/>
            <person name="Chen R."/>
            <person name="Ma D."/>
            <person name="Qiang B."/>
            <person name="Wen Y."/>
            <person name="Hou Y."/>
            <person name="Yu J."/>
        </authorList>
    </citation>
    <scope>NUCLEOTIDE SEQUENCE [LARGE SCALE GENOMIC DNA]</scope>
    <source>
        <strain>301 / Serotype 2a</strain>
    </source>
</reference>
<reference key="2">
    <citation type="journal article" date="2003" name="Infect. Immun.">
        <title>Complete genome sequence and comparative genomics of Shigella flexneri serotype 2a strain 2457T.</title>
        <authorList>
            <person name="Wei J."/>
            <person name="Goldberg M.B."/>
            <person name="Burland V."/>
            <person name="Venkatesan M.M."/>
            <person name="Deng W."/>
            <person name="Fournier G."/>
            <person name="Mayhew G.F."/>
            <person name="Plunkett G. III"/>
            <person name="Rose D.J."/>
            <person name="Darling A."/>
            <person name="Mau B."/>
            <person name="Perna N.T."/>
            <person name="Payne S.M."/>
            <person name="Runyen-Janecky L.J."/>
            <person name="Zhou S."/>
            <person name="Schwartz D.C."/>
            <person name="Blattner F.R."/>
        </authorList>
    </citation>
    <scope>NUCLEOTIDE SEQUENCE [LARGE SCALE GENOMIC DNA]</scope>
    <source>
        <strain>ATCC 700930 / 2457T / Serotype 2a</strain>
    </source>
</reference>
<name>PTH_SHIFL</name>
<evidence type="ECO:0000255" key="1">
    <source>
        <dbReference type="HAMAP-Rule" id="MF_00083"/>
    </source>
</evidence>
<accession>Q83LE1</accession>
<gene>
    <name evidence="1" type="primary">pth</name>
    <name type="ordered locus">SF1207</name>
    <name type="ordered locus">S1291</name>
</gene>
<comment type="function">
    <text evidence="1">Hydrolyzes ribosome-free peptidyl-tRNAs (with 1 or more amino acids incorporated), which drop off the ribosome during protein synthesis, or as a result of ribosome stalling.</text>
</comment>
<comment type="function">
    <text evidence="1">Catalyzes the release of premature peptidyl moieties from peptidyl-tRNA molecules trapped in stalled 50S ribosomal subunits, and thus maintains levels of free tRNAs and 50S ribosomes.</text>
</comment>
<comment type="catalytic activity">
    <reaction evidence="1">
        <text>an N-acyl-L-alpha-aminoacyl-tRNA + H2O = an N-acyl-L-amino acid + a tRNA + H(+)</text>
        <dbReference type="Rhea" id="RHEA:54448"/>
        <dbReference type="Rhea" id="RHEA-COMP:10123"/>
        <dbReference type="Rhea" id="RHEA-COMP:13883"/>
        <dbReference type="ChEBI" id="CHEBI:15377"/>
        <dbReference type="ChEBI" id="CHEBI:15378"/>
        <dbReference type="ChEBI" id="CHEBI:59874"/>
        <dbReference type="ChEBI" id="CHEBI:78442"/>
        <dbReference type="ChEBI" id="CHEBI:138191"/>
        <dbReference type="EC" id="3.1.1.29"/>
    </reaction>
</comment>
<comment type="subunit">
    <text evidence="1">Monomer.</text>
</comment>
<comment type="subcellular location">
    <subcellularLocation>
        <location evidence="1">Cytoplasm</location>
    </subcellularLocation>
</comment>
<comment type="similarity">
    <text evidence="1">Belongs to the PTH family.</text>
</comment>
<dbReference type="EC" id="3.1.1.29" evidence="1"/>
<dbReference type="EMBL" id="AE005674">
    <property type="protein sequence ID" value="AAN42820.1"/>
    <property type="molecule type" value="Genomic_DNA"/>
</dbReference>
<dbReference type="EMBL" id="AE014073">
    <property type="protein sequence ID" value="AAP16706.1"/>
    <property type="molecule type" value="Genomic_DNA"/>
</dbReference>
<dbReference type="RefSeq" id="NP_707113.1">
    <property type="nucleotide sequence ID" value="NC_004337.2"/>
</dbReference>
<dbReference type="RefSeq" id="WP_000152949.1">
    <property type="nucleotide sequence ID" value="NZ_WPGW01000029.1"/>
</dbReference>
<dbReference type="SMR" id="Q83LE1"/>
<dbReference type="STRING" id="198214.SF1207"/>
<dbReference type="PaxDb" id="198214-SF1207"/>
<dbReference type="GeneID" id="1024197"/>
<dbReference type="KEGG" id="sfl:SF1207"/>
<dbReference type="KEGG" id="sfx:S1291"/>
<dbReference type="PATRIC" id="fig|198214.7.peg.1424"/>
<dbReference type="HOGENOM" id="CLU_062456_3_1_6"/>
<dbReference type="Proteomes" id="UP000001006">
    <property type="component" value="Chromosome"/>
</dbReference>
<dbReference type="Proteomes" id="UP000002673">
    <property type="component" value="Chromosome"/>
</dbReference>
<dbReference type="GO" id="GO:0005737">
    <property type="term" value="C:cytoplasm"/>
    <property type="evidence" value="ECO:0007669"/>
    <property type="project" value="UniProtKB-SubCell"/>
</dbReference>
<dbReference type="GO" id="GO:0004045">
    <property type="term" value="F:peptidyl-tRNA hydrolase activity"/>
    <property type="evidence" value="ECO:0007669"/>
    <property type="project" value="UniProtKB-UniRule"/>
</dbReference>
<dbReference type="GO" id="GO:0000049">
    <property type="term" value="F:tRNA binding"/>
    <property type="evidence" value="ECO:0007669"/>
    <property type="project" value="UniProtKB-UniRule"/>
</dbReference>
<dbReference type="GO" id="GO:0006515">
    <property type="term" value="P:protein quality control for misfolded or incompletely synthesized proteins"/>
    <property type="evidence" value="ECO:0007669"/>
    <property type="project" value="UniProtKB-UniRule"/>
</dbReference>
<dbReference type="GO" id="GO:0072344">
    <property type="term" value="P:rescue of stalled ribosome"/>
    <property type="evidence" value="ECO:0007669"/>
    <property type="project" value="UniProtKB-UniRule"/>
</dbReference>
<dbReference type="CDD" id="cd00462">
    <property type="entry name" value="PTH"/>
    <property type="match status" value="1"/>
</dbReference>
<dbReference type="FunFam" id="3.40.50.1470:FF:000001">
    <property type="entry name" value="Peptidyl-tRNA hydrolase"/>
    <property type="match status" value="1"/>
</dbReference>
<dbReference type="Gene3D" id="3.40.50.1470">
    <property type="entry name" value="Peptidyl-tRNA hydrolase"/>
    <property type="match status" value="1"/>
</dbReference>
<dbReference type="HAMAP" id="MF_00083">
    <property type="entry name" value="Pept_tRNA_hydro_bact"/>
    <property type="match status" value="1"/>
</dbReference>
<dbReference type="InterPro" id="IPR001328">
    <property type="entry name" value="Pept_tRNA_hydro"/>
</dbReference>
<dbReference type="InterPro" id="IPR018171">
    <property type="entry name" value="Pept_tRNA_hydro_CS"/>
</dbReference>
<dbReference type="InterPro" id="IPR036416">
    <property type="entry name" value="Pept_tRNA_hydro_sf"/>
</dbReference>
<dbReference type="NCBIfam" id="TIGR00447">
    <property type="entry name" value="pth"/>
    <property type="match status" value="1"/>
</dbReference>
<dbReference type="PANTHER" id="PTHR17224">
    <property type="entry name" value="PEPTIDYL-TRNA HYDROLASE"/>
    <property type="match status" value="1"/>
</dbReference>
<dbReference type="PANTHER" id="PTHR17224:SF1">
    <property type="entry name" value="PEPTIDYL-TRNA HYDROLASE"/>
    <property type="match status" value="1"/>
</dbReference>
<dbReference type="Pfam" id="PF01195">
    <property type="entry name" value="Pept_tRNA_hydro"/>
    <property type="match status" value="1"/>
</dbReference>
<dbReference type="SUPFAM" id="SSF53178">
    <property type="entry name" value="Peptidyl-tRNA hydrolase-like"/>
    <property type="match status" value="1"/>
</dbReference>
<dbReference type="PROSITE" id="PS01195">
    <property type="entry name" value="PEPT_TRNA_HYDROL_1"/>
    <property type="match status" value="1"/>
</dbReference>
<dbReference type="PROSITE" id="PS01196">
    <property type="entry name" value="PEPT_TRNA_HYDROL_2"/>
    <property type="match status" value="1"/>
</dbReference>
<feature type="chain" id="PRO_0000187812" description="Peptidyl-tRNA hydrolase">
    <location>
        <begin position="1"/>
        <end position="194"/>
    </location>
</feature>
<feature type="active site" description="Proton acceptor" evidence="1">
    <location>
        <position position="21"/>
    </location>
</feature>
<feature type="binding site" evidence="1">
    <location>
        <position position="16"/>
    </location>
    <ligand>
        <name>tRNA</name>
        <dbReference type="ChEBI" id="CHEBI:17843"/>
    </ligand>
</feature>
<feature type="binding site" evidence="1">
    <location>
        <position position="67"/>
    </location>
    <ligand>
        <name>tRNA</name>
        <dbReference type="ChEBI" id="CHEBI:17843"/>
    </ligand>
</feature>
<feature type="binding site" evidence="1">
    <location>
        <position position="69"/>
    </location>
    <ligand>
        <name>tRNA</name>
        <dbReference type="ChEBI" id="CHEBI:17843"/>
    </ligand>
</feature>
<feature type="binding site" evidence="1">
    <location>
        <position position="115"/>
    </location>
    <ligand>
        <name>tRNA</name>
        <dbReference type="ChEBI" id="CHEBI:17843"/>
    </ligand>
</feature>
<feature type="site" description="Discriminates between blocked and unblocked aminoacyl-tRNA" evidence="1">
    <location>
        <position position="11"/>
    </location>
</feature>
<feature type="site" description="Stabilizes the basic form of H active site to accept a proton" evidence="1">
    <location>
        <position position="94"/>
    </location>
</feature>
<organism>
    <name type="scientific">Shigella flexneri</name>
    <dbReference type="NCBI Taxonomy" id="623"/>
    <lineage>
        <taxon>Bacteria</taxon>
        <taxon>Pseudomonadati</taxon>
        <taxon>Pseudomonadota</taxon>
        <taxon>Gammaproteobacteria</taxon>
        <taxon>Enterobacterales</taxon>
        <taxon>Enterobacteriaceae</taxon>
        <taxon>Shigella</taxon>
    </lineage>
</organism>
<proteinExistence type="inferred from homology"/>
<protein>
    <recommendedName>
        <fullName evidence="1">Peptidyl-tRNA hydrolase</fullName>
        <shortName evidence="1">Pth</shortName>
        <ecNumber evidence="1">3.1.1.29</ecNumber>
    </recommendedName>
</protein>
<sequence length="194" mass="21112">MTIKLIVGLANPGAEYAATRHNAGAWFVDLLAERLRAPLREEAKFFGYTSRVTLGSEDVRLLVPTTFMNLSGKAVAAMASFFRINPDEILVAHDELDLPPGVAKFKLGGGHGGHNGLKDIISKLGNNPNFHRLRIGIGHPGDKNKVVGFVLGKPPVSEQKLIDEAIDEAARCTEMWFTDGLTKATNRLHAFKAQ</sequence>